<keyword id="KW-0007">Acetylation</keyword>
<keyword id="KW-0025">Alternative splicing</keyword>
<keyword id="KW-0067">ATP-binding</keyword>
<keyword id="KW-0106">Calcium</keyword>
<keyword id="KW-0109">Calcium transport</keyword>
<keyword id="KW-0256">Endoplasmic reticulum</keyword>
<keyword id="KW-0406">Ion transport</keyword>
<keyword id="KW-0460">Magnesium</keyword>
<keyword id="KW-0472">Membrane</keyword>
<keyword id="KW-0479">Metal-binding</keyword>
<keyword id="KW-0547">Nucleotide-binding</keyword>
<keyword id="KW-0597">Phosphoprotein</keyword>
<keyword id="KW-1185">Reference proteome</keyword>
<keyword id="KW-0703">Sarcoplasmic reticulum</keyword>
<keyword id="KW-1278">Translocase</keyword>
<keyword id="KW-0812">Transmembrane</keyword>
<keyword id="KW-1133">Transmembrane helix</keyword>
<keyword id="KW-0813">Transport</keyword>
<name>AT2A3_MOUSE</name>
<gene>
    <name type="primary">Atp2a3</name>
</gene>
<feature type="chain" id="PRO_0000046203" description="Sarcoplasmic/endoplasmic reticulum calcium ATPase 3">
    <location>
        <begin position="1"/>
        <end position="999"/>
    </location>
</feature>
<feature type="topological domain" description="Cytoplasmic" evidence="1">
    <location>
        <begin position="1"/>
        <end position="48"/>
    </location>
</feature>
<feature type="transmembrane region" description="Helical; Name=1" evidence="1">
    <location>
        <begin position="49"/>
        <end position="69"/>
    </location>
</feature>
<feature type="topological domain" description="Lumenal" evidence="1">
    <location>
        <begin position="70"/>
        <end position="89"/>
    </location>
</feature>
<feature type="transmembrane region" description="Helical; Name=2" evidence="1">
    <location>
        <begin position="90"/>
        <end position="110"/>
    </location>
</feature>
<feature type="topological domain" description="Cytoplasmic" evidence="1">
    <location>
        <begin position="111"/>
        <end position="253"/>
    </location>
</feature>
<feature type="transmembrane region" description="Helical; Name=3" evidence="1">
    <location>
        <begin position="254"/>
        <end position="273"/>
    </location>
</feature>
<feature type="topological domain" description="Lumenal" evidence="1">
    <location>
        <begin position="274"/>
        <end position="295"/>
    </location>
</feature>
<feature type="transmembrane region" description="Helical; Name=4" evidence="1">
    <location>
        <begin position="296"/>
        <end position="313"/>
    </location>
</feature>
<feature type="topological domain" description="Cytoplasmic" evidence="1">
    <location>
        <begin position="314"/>
        <end position="757"/>
    </location>
</feature>
<feature type="transmembrane region" description="Helical; Name=5" evidence="1">
    <location>
        <begin position="758"/>
        <end position="777"/>
    </location>
</feature>
<feature type="topological domain" description="Lumenal" evidence="1">
    <location>
        <begin position="778"/>
        <end position="787"/>
    </location>
</feature>
<feature type="transmembrane region" description="Helical; Name=6" evidence="1">
    <location>
        <begin position="788"/>
        <end position="808"/>
    </location>
</feature>
<feature type="topological domain" description="Cytoplasmic" evidence="1">
    <location>
        <begin position="809"/>
        <end position="828"/>
    </location>
</feature>
<feature type="transmembrane region" description="Helical; Name=7" evidence="1">
    <location>
        <begin position="829"/>
        <end position="851"/>
    </location>
</feature>
<feature type="topological domain" description="Lumenal" evidence="1">
    <location>
        <begin position="852"/>
        <end position="897"/>
    </location>
</feature>
<feature type="transmembrane region" description="Helical; Name=8" evidence="1">
    <location>
        <begin position="898"/>
        <end position="917"/>
    </location>
</feature>
<feature type="topological domain" description="Cytoplasmic" evidence="1">
    <location>
        <begin position="918"/>
        <end position="930"/>
    </location>
</feature>
<feature type="transmembrane region" description="Helical; Name=9" evidence="1">
    <location>
        <begin position="931"/>
        <end position="949"/>
    </location>
</feature>
<feature type="topological domain" description="Lumenal" evidence="1">
    <location>
        <begin position="950"/>
        <end position="964"/>
    </location>
</feature>
<feature type="transmembrane region" description="Helical; Name=10" evidence="1">
    <location>
        <begin position="965"/>
        <end position="985"/>
    </location>
</feature>
<feature type="topological domain" description="Cytoplasmic" evidence="1">
    <location>
        <begin position="986"/>
        <end position="999"/>
    </location>
</feature>
<feature type="region of interest" description="Interaction with phospholamban 1" evidence="1">
    <location>
        <begin position="370"/>
        <end position="400"/>
    </location>
</feature>
<feature type="region of interest" description="Interaction with phospholamban 2" evidence="1">
    <location>
        <begin position="788"/>
        <end position="808"/>
    </location>
</feature>
<feature type="active site" description="4-aspartylphosphate intermediate" evidence="1">
    <location>
        <position position="351"/>
    </location>
</feature>
<feature type="binding site" evidence="1">
    <location>
        <position position="304"/>
    </location>
    <ligand>
        <name>Ca(2+)</name>
        <dbReference type="ChEBI" id="CHEBI:29108"/>
        <label>2</label>
    </ligand>
</feature>
<feature type="binding site" evidence="1">
    <location>
        <position position="305"/>
    </location>
    <ligand>
        <name>Ca(2+)</name>
        <dbReference type="ChEBI" id="CHEBI:29108"/>
        <label>2</label>
    </ligand>
</feature>
<feature type="binding site" evidence="1">
    <location>
        <position position="307"/>
    </location>
    <ligand>
        <name>Ca(2+)</name>
        <dbReference type="ChEBI" id="CHEBI:29108"/>
        <label>2</label>
    </ligand>
</feature>
<feature type="binding site" evidence="1">
    <location>
        <position position="309"/>
    </location>
    <ligand>
        <name>Ca(2+)</name>
        <dbReference type="ChEBI" id="CHEBI:29108"/>
        <label>2</label>
    </ligand>
</feature>
<feature type="binding site" evidence="1">
    <location>
        <position position="351"/>
    </location>
    <ligand>
        <name>Mg(2+)</name>
        <dbReference type="ChEBI" id="CHEBI:18420"/>
    </ligand>
</feature>
<feature type="binding site" evidence="1">
    <location>
        <position position="353"/>
    </location>
    <ligand>
        <name>ATP</name>
        <dbReference type="ChEBI" id="CHEBI:30616"/>
    </ligand>
</feature>
<feature type="binding site" evidence="1">
    <location>
        <position position="353"/>
    </location>
    <ligand>
        <name>Mg(2+)</name>
        <dbReference type="ChEBI" id="CHEBI:18420"/>
    </ligand>
</feature>
<feature type="binding site" evidence="1">
    <location>
        <position position="442"/>
    </location>
    <ligand>
        <name>ATP</name>
        <dbReference type="ChEBI" id="CHEBI:30616"/>
    </ligand>
</feature>
<feature type="binding site" evidence="1">
    <location>
        <position position="489"/>
    </location>
    <ligand>
        <name>ATP</name>
        <dbReference type="ChEBI" id="CHEBI:30616"/>
    </ligand>
</feature>
<feature type="binding site" evidence="1">
    <location>
        <position position="515"/>
    </location>
    <ligand>
        <name>ATP</name>
        <dbReference type="ChEBI" id="CHEBI:30616"/>
    </ligand>
</feature>
<feature type="binding site" evidence="1">
    <location>
        <position position="560"/>
    </location>
    <ligand>
        <name>ATP</name>
        <dbReference type="ChEBI" id="CHEBI:30616"/>
    </ligand>
</feature>
<feature type="binding site" evidence="1">
    <location>
        <position position="625"/>
    </location>
    <ligand>
        <name>ATP</name>
        <dbReference type="ChEBI" id="CHEBI:30616"/>
    </ligand>
</feature>
<feature type="binding site" evidence="1">
    <location>
        <position position="626"/>
    </location>
    <ligand>
        <name>ATP</name>
        <dbReference type="ChEBI" id="CHEBI:30616"/>
    </ligand>
</feature>
<feature type="binding site" evidence="1">
    <location>
        <position position="627"/>
    </location>
    <ligand>
        <name>ATP</name>
        <dbReference type="ChEBI" id="CHEBI:30616"/>
    </ligand>
</feature>
<feature type="binding site" evidence="1">
    <location>
        <position position="678"/>
    </location>
    <ligand>
        <name>ATP</name>
        <dbReference type="ChEBI" id="CHEBI:30616"/>
    </ligand>
</feature>
<feature type="binding site" evidence="1">
    <location>
        <position position="684"/>
    </location>
    <ligand>
        <name>ATP</name>
        <dbReference type="ChEBI" id="CHEBI:30616"/>
    </ligand>
</feature>
<feature type="binding site" evidence="1">
    <location>
        <position position="703"/>
    </location>
    <ligand>
        <name>Mg(2+)</name>
        <dbReference type="ChEBI" id="CHEBI:18420"/>
    </ligand>
</feature>
<feature type="binding site" evidence="1">
    <location>
        <position position="706"/>
    </location>
    <ligand>
        <name>ATP</name>
        <dbReference type="ChEBI" id="CHEBI:30616"/>
    </ligand>
</feature>
<feature type="binding site" evidence="1">
    <location>
        <position position="768"/>
    </location>
    <ligand>
        <name>Ca(2+)</name>
        <dbReference type="ChEBI" id="CHEBI:29108"/>
        <label>1</label>
    </ligand>
</feature>
<feature type="binding site" evidence="1">
    <location>
        <position position="771"/>
    </location>
    <ligand>
        <name>Ca(2+)</name>
        <dbReference type="ChEBI" id="CHEBI:29108"/>
        <label>1</label>
    </ligand>
</feature>
<feature type="binding site" evidence="1">
    <location>
        <position position="796"/>
    </location>
    <ligand>
        <name>Ca(2+)</name>
        <dbReference type="ChEBI" id="CHEBI:29108"/>
        <label>2</label>
    </ligand>
</feature>
<feature type="binding site" evidence="1">
    <location>
        <position position="799"/>
    </location>
    <ligand>
        <name>Ca(2+)</name>
        <dbReference type="ChEBI" id="CHEBI:29108"/>
        <label>1</label>
    </ligand>
</feature>
<feature type="binding site" evidence="1">
    <location>
        <position position="800"/>
    </location>
    <ligand>
        <name>Ca(2+)</name>
        <dbReference type="ChEBI" id="CHEBI:29108"/>
        <label>1</label>
    </ligand>
</feature>
<feature type="binding site" evidence="1">
    <location>
        <position position="800"/>
    </location>
    <ligand>
        <name>Ca(2+)</name>
        <dbReference type="ChEBI" id="CHEBI:29108"/>
        <label>2</label>
    </ligand>
</feature>
<feature type="binding site" evidence="1">
    <location>
        <position position="908"/>
    </location>
    <ligand>
        <name>Ca(2+)</name>
        <dbReference type="ChEBI" id="CHEBI:29108"/>
        <label>1</label>
    </ligand>
</feature>
<feature type="modified residue" description="N-acetylmethionine" evidence="3">
    <location>
        <position position="1"/>
    </location>
</feature>
<feature type="modified residue" description="Phosphoserine" evidence="6">
    <location>
        <position position="17"/>
    </location>
</feature>
<feature type="modified residue" description="Phosphothreonine" evidence="6">
    <location>
        <position position="19"/>
    </location>
</feature>
<feature type="modified residue" description="Phosphoserine" evidence="6">
    <location>
        <position position="25"/>
    </location>
</feature>
<feature type="modified residue" description="Phosphothreonine" evidence="6">
    <location>
        <position position="415"/>
    </location>
</feature>
<feature type="modified residue" description="Phosphoserine" evidence="3">
    <location>
        <position position="662"/>
    </location>
</feature>
<feature type="splice variant" id="VSP_060850" description="In isoform SERCA3B." evidence="5">
    <original>EKKDLK</original>
    <variation>GVLGTFMQARSRQLPTTSRTPYHTGKKGPEVNPGSRGESPVWPSD</variation>
    <location>
        <begin position="994"/>
        <end position="999"/>
    </location>
</feature>
<feature type="splice variant" id="VSP_060851" description="In isoform SERCA3C." evidence="5">
    <original>EKKDLK</original>
    <variation>GVLGTFMQARSRQLPTTSRTPYHTGLACKKKT</variation>
    <location>
        <begin position="994"/>
        <end position="999"/>
    </location>
</feature>
<feature type="sequence conflict" description="In Ref. 1; AAB04098/AAB04099." evidence="5" ref="1">
    <original>T</original>
    <variation>A</variation>
    <location>
        <position position="860"/>
    </location>
</feature>
<organism>
    <name type="scientific">Mus musculus</name>
    <name type="common">Mouse</name>
    <dbReference type="NCBI Taxonomy" id="10090"/>
    <lineage>
        <taxon>Eukaryota</taxon>
        <taxon>Metazoa</taxon>
        <taxon>Chordata</taxon>
        <taxon>Craniata</taxon>
        <taxon>Vertebrata</taxon>
        <taxon>Euteleostomi</taxon>
        <taxon>Mammalia</taxon>
        <taxon>Eutheria</taxon>
        <taxon>Euarchontoglires</taxon>
        <taxon>Glires</taxon>
        <taxon>Rodentia</taxon>
        <taxon>Myomorpha</taxon>
        <taxon>Muroidea</taxon>
        <taxon>Muridae</taxon>
        <taxon>Murinae</taxon>
        <taxon>Mus</taxon>
        <taxon>Mus</taxon>
    </lineage>
</organism>
<evidence type="ECO:0000250" key="1">
    <source>
        <dbReference type="UniProtKB" id="P04191"/>
    </source>
</evidence>
<evidence type="ECO:0000250" key="2">
    <source>
        <dbReference type="UniProtKB" id="Q8R429"/>
    </source>
</evidence>
<evidence type="ECO:0000250" key="3">
    <source>
        <dbReference type="UniProtKB" id="Q93084"/>
    </source>
</evidence>
<evidence type="ECO:0000269" key="4">
    <source>
    </source>
</evidence>
<evidence type="ECO:0000305" key="5"/>
<evidence type="ECO:0007744" key="6">
    <source>
    </source>
</evidence>
<protein>
    <recommendedName>
        <fullName>Sarcoplasmic/endoplasmic reticulum calcium ATPase 3</fullName>
        <shortName>SERCA3</shortName>
        <shortName>SR Ca(2+)-ATPase 3</shortName>
        <ecNumber>7.2.2.10</ecNumber>
    </recommendedName>
    <alternativeName>
        <fullName>Calcium pump 3</fullName>
    </alternativeName>
</protein>
<accession>Q64518</accession>
<accession>O70625</accession>
<accession>Q64517</accession>
<accession>Q8VD16</accession>
<reference key="1">
    <citation type="submission" date="1996-07" db="EMBL/GenBank/DDBJ databases">
        <authorList>
            <person name="Tokuyama Y."/>
            <person name="Chen X."/>
            <person name="Roe M.W."/>
            <person name="Bell G.I."/>
        </authorList>
    </citation>
    <scope>NUCLEOTIDE SEQUENCE [MRNA] (ISOFORMS SERCA3A AND SERCA3B)</scope>
    <source>
        <strain>C57BL/6J</strain>
    </source>
</reference>
<reference key="2">
    <citation type="submission" date="2005-07" db="EMBL/GenBank/DDBJ databases">
        <authorList>
            <person name="Mural R.J."/>
            <person name="Adams M.D."/>
            <person name="Myers E.W."/>
            <person name="Smith H.O."/>
            <person name="Venter J.C."/>
        </authorList>
    </citation>
    <scope>NUCLEOTIDE SEQUENCE [LARGE SCALE GENOMIC DNA]</scope>
</reference>
<reference key="3">
    <citation type="journal article" date="2004" name="Genome Res.">
        <title>The status, quality, and expansion of the NIH full-length cDNA project: the Mammalian Gene Collection (MGC).</title>
        <authorList>
            <consortium name="The MGC Project Team"/>
        </authorList>
    </citation>
    <scope>NUCLEOTIDE SEQUENCE [LARGE SCALE MRNA]</scope>
    <source>
        <strain>FVB/N</strain>
        <tissue>Salivary gland</tissue>
    </source>
</reference>
<reference key="4">
    <citation type="journal article" date="1998" name="J. Biol. Chem.">
        <title>Structure of the human sarco/endoplasmic reticulum Ca2+-ATPase 3 gene. Promoter analysis and alternative splicing of the SERCA3 pre-mRNA.</title>
        <authorList>
            <person name="Dode L."/>
            <person name="De Greef C."/>
            <person name="Mountian I."/>
            <person name="Attard M."/>
            <person name="Town M.M."/>
            <person name="Casteels R."/>
            <person name="Wuytack F."/>
        </authorList>
    </citation>
    <scope>PARTIAL NUCLEOTIDE SEQUENCE [GENOMIC DNA] (ISOFORM SERCA3A)</scope>
    <scope>ALTERNATIVE SPLICING</scope>
</reference>
<reference key="5">
    <citation type="journal article" date="2010" name="Cell">
        <title>A tissue-specific atlas of mouse protein phosphorylation and expression.</title>
        <authorList>
            <person name="Huttlin E.L."/>
            <person name="Jedrychowski M.P."/>
            <person name="Elias J.E."/>
            <person name="Goswami T."/>
            <person name="Rad R."/>
            <person name="Beausoleil S.A."/>
            <person name="Villen J."/>
            <person name="Haas W."/>
            <person name="Sowa M.E."/>
            <person name="Gygi S.P."/>
        </authorList>
    </citation>
    <scope>PHOSPHORYLATION [LARGE SCALE ANALYSIS] AT SER-17; THR-19; SER-25 AND THR-415</scope>
    <scope>IDENTIFICATION BY MASS SPECTROMETRY [LARGE SCALE ANALYSIS]</scope>
    <source>
        <tissue>Brain</tissue>
        <tissue>Brown adipose tissue</tissue>
        <tissue>Kidney</tissue>
        <tissue>Lung</tissue>
        <tissue>Spleen</tissue>
    </source>
</reference>
<reference key="6">
    <citation type="journal article" date="2016" name="Sci. Signal.">
        <title>Widespread control of calcium signaling by a family of SERCA-inhibiting micropeptides.</title>
        <authorList>
            <person name="Anderson D.M."/>
            <person name="Makarewich C.A."/>
            <person name="Anderson K.M."/>
            <person name="Shelton J.M."/>
            <person name="Bezprozvannaya S."/>
            <person name="Bassel-Duby R."/>
            <person name="Olson E.N."/>
        </authorList>
    </citation>
    <scope>FUNCTION</scope>
</reference>
<comment type="function">
    <text evidence="3 4">This magnesium-dependent enzyme catalyzes the hydrolysis of ATP coupled with the transport of calcium. Transports calcium ions from the cytosol into the sarcoplasmic/endoplasmic reticulum lumen (PubMed:27923914). Contributes to calcium sequestration involved in muscular excitation/contraction.</text>
</comment>
<comment type="catalytic activity">
    <reaction evidence="3">
        <text>Ca(2+)(in) + ATP + H2O = Ca(2+)(out) + ADP + phosphate + H(+)</text>
        <dbReference type="Rhea" id="RHEA:18105"/>
        <dbReference type="ChEBI" id="CHEBI:15377"/>
        <dbReference type="ChEBI" id="CHEBI:15378"/>
        <dbReference type="ChEBI" id="CHEBI:29108"/>
        <dbReference type="ChEBI" id="CHEBI:30616"/>
        <dbReference type="ChEBI" id="CHEBI:43474"/>
        <dbReference type="ChEBI" id="CHEBI:456216"/>
        <dbReference type="EC" id="7.2.2.10"/>
    </reaction>
    <physiologicalReaction direction="left-to-right" evidence="3">
        <dbReference type="Rhea" id="RHEA:18106"/>
    </physiologicalReaction>
</comment>
<comment type="cofactor">
    <cofactor evidence="1">
        <name>Mg(2+)</name>
        <dbReference type="ChEBI" id="CHEBI:18420"/>
    </cofactor>
</comment>
<comment type="activity regulation">
    <text evidence="1 2">Inhibited by sarcolipin (SLN), phospholamban (PLN) and myoregulin (MRLN) (By similarity). Enhanced by DWORF; DWORF increases activity by displacing sarcolipin (SLN), phospholamban (PLN) and myoregulin (MRLN) (By similarity).</text>
</comment>
<comment type="subunit">
    <text evidence="1 2 3">Interacts with sarcolipin (SLN) (By similarity). Interacts with phospholamban (PLN) (By similarity). Interacts with myoregulin (MRLN). Interacts with DWORF (By similarity). Interacts with VMP1 (By similarity). Interacts with TUNAR; the interaction occurs at low levels in low glucose conditions and is increased by high glucose levels (By similarity).</text>
</comment>
<comment type="subcellular location">
    <subcellularLocation>
        <location evidence="3">Endoplasmic reticulum membrane</location>
        <topology evidence="3">Multi-pass membrane protein</topology>
    </subcellularLocation>
    <subcellularLocation>
        <location evidence="3">Sarcoplasmic reticulum membrane</location>
        <topology evidence="3">Multi-pass membrane protein</topology>
    </subcellularLocation>
</comment>
<comment type="alternative products">
    <event type="alternative splicing"/>
    <isoform>
        <id>Q64518-2</id>
        <name>SERCA3A</name>
        <sequence type="displayed"/>
    </isoform>
    <isoform>
        <id>Q64518-1</id>
        <name>SERCA3B</name>
        <sequence type="described" ref="VSP_060850"/>
    </isoform>
    <isoform>
        <id>Q64518-3</id>
        <name>SERCA3C</name>
        <sequence type="described" ref="VSP_060851"/>
    </isoform>
</comment>
<comment type="similarity">
    <text evidence="5">Belongs to the cation transport ATPase (P-type) (TC 3.A.3) family. Type IIA subfamily.</text>
</comment>
<dbReference type="EC" id="7.2.2.10"/>
<dbReference type="EMBL" id="U49394">
    <property type="protein sequence ID" value="AAB04099.1"/>
    <property type="molecule type" value="mRNA"/>
</dbReference>
<dbReference type="EMBL" id="U49393">
    <property type="protein sequence ID" value="AAB04098.1"/>
    <property type="molecule type" value="mRNA"/>
</dbReference>
<dbReference type="EMBL" id="CH466596">
    <property type="protein sequence ID" value="EDL12704.1"/>
    <property type="molecule type" value="Genomic_DNA"/>
</dbReference>
<dbReference type="EMBL" id="BC017639">
    <property type="protein sequence ID" value="AAH17639.1"/>
    <property type="molecule type" value="mRNA"/>
</dbReference>
<dbReference type="EMBL" id="Y15734">
    <property type="protein sequence ID" value="CAA75744.1"/>
    <property type="molecule type" value="Genomic_DNA"/>
</dbReference>
<dbReference type="EMBL" id="Y15735">
    <property type="protein sequence ID" value="CAA75744.1"/>
    <property type="status" value="JOINED"/>
    <property type="molecule type" value="Genomic_DNA"/>
</dbReference>
<dbReference type="EMBL" id="Y15734">
    <property type="protein sequence ID" value="CAA75745.1"/>
    <property type="molecule type" value="Genomic_DNA"/>
</dbReference>
<dbReference type="EMBL" id="Y15735">
    <property type="protein sequence ID" value="CAA75745.1"/>
    <property type="status" value="JOINED"/>
    <property type="molecule type" value="Genomic_DNA"/>
</dbReference>
<dbReference type="EMBL" id="Y15734">
    <property type="protein sequence ID" value="CAA75743.1"/>
    <property type="molecule type" value="Genomic_DNA"/>
</dbReference>
<dbReference type="EMBL" id="Y15735">
    <property type="protein sequence ID" value="CAA75743.1"/>
    <property type="status" value="JOINED"/>
    <property type="molecule type" value="Genomic_DNA"/>
</dbReference>
<dbReference type="EMBL" id="Y15736">
    <property type="protein sequence ID" value="CAA75746.1"/>
    <property type="molecule type" value="Genomic_DNA"/>
</dbReference>
<dbReference type="CCDS" id="CCDS24991.1">
    <molecule id="Q64518-1"/>
</dbReference>
<dbReference type="CCDS" id="CCDS48843.1">
    <molecule id="Q64518-2"/>
</dbReference>
<dbReference type="RefSeq" id="NP_001156808.1">
    <molecule id="Q64518-2"/>
    <property type="nucleotide sequence ID" value="NM_001163336.1"/>
</dbReference>
<dbReference type="RefSeq" id="NP_001156809.1">
    <property type="nucleotide sequence ID" value="NM_001163337.1"/>
</dbReference>
<dbReference type="RefSeq" id="NP_058025.2">
    <molecule id="Q64518-1"/>
    <property type="nucleotide sequence ID" value="NM_016745.3"/>
</dbReference>
<dbReference type="SMR" id="Q64518"/>
<dbReference type="BioGRID" id="207277">
    <property type="interactions" value="6"/>
</dbReference>
<dbReference type="FunCoup" id="Q64518">
    <property type="interactions" value="1373"/>
</dbReference>
<dbReference type="IntAct" id="Q64518">
    <property type="interactions" value="2"/>
</dbReference>
<dbReference type="MINT" id="Q64518"/>
<dbReference type="STRING" id="10090.ENSMUSP00000021142"/>
<dbReference type="BindingDB" id="Q64518"/>
<dbReference type="ChEMBL" id="CHEMBL4523338"/>
<dbReference type="GlyGen" id="Q64518">
    <property type="glycosylation" value="1 site, 1 O-linked glycan (1 site)"/>
</dbReference>
<dbReference type="iPTMnet" id="Q64518"/>
<dbReference type="PhosphoSitePlus" id="Q64518"/>
<dbReference type="SwissPalm" id="Q64518"/>
<dbReference type="jPOST" id="Q64518"/>
<dbReference type="PaxDb" id="10090-ENSMUSP00000021142"/>
<dbReference type="ProteomicsDB" id="265125">
    <molecule id="Q64518-2"/>
</dbReference>
<dbReference type="ProteomicsDB" id="265126">
    <molecule id="Q64518-2"/>
</dbReference>
<dbReference type="ProteomicsDB" id="265127">
    <molecule id="Q64518-3"/>
</dbReference>
<dbReference type="Antibodypedia" id="1517">
    <property type="antibodies" value="149 antibodies from 29 providers"/>
</dbReference>
<dbReference type="DNASU" id="53313"/>
<dbReference type="Ensembl" id="ENSMUST00000021142.8">
    <molecule id="Q64518-1"/>
    <property type="protein sequence ID" value="ENSMUSP00000021142.8"/>
    <property type="gene ID" value="ENSMUSG00000020788.16"/>
</dbReference>
<dbReference type="Ensembl" id="ENSMUST00000108485.9">
    <molecule id="Q64518-2"/>
    <property type="protein sequence ID" value="ENSMUSP00000104125.3"/>
    <property type="gene ID" value="ENSMUSG00000020788.16"/>
</dbReference>
<dbReference type="GeneID" id="53313"/>
<dbReference type="KEGG" id="mmu:53313"/>
<dbReference type="UCSC" id="uc007jzo.2">
    <molecule id="Q64518-2"/>
    <property type="organism name" value="mouse"/>
</dbReference>
<dbReference type="AGR" id="MGI:1194503"/>
<dbReference type="CTD" id="489"/>
<dbReference type="MGI" id="MGI:1194503">
    <property type="gene designation" value="Atp2a3"/>
</dbReference>
<dbReference type="VEuPathDB" id="HostDB:ENSMUSG00000020788"/>
<dbReference type="eggNOG" id="KOG0202">
    <property type="taxonomic scope" value="Eukaryota"/>
</dbReference>
<dbReference type="GeneTree" id="ENSGT00940000155668"/>
<dbReference type="HOGENOM" id="CLU_002360_3_2_1"/>
<dbReference type="InParanoid" id="Q64518"/>
<dbReference type="OMA" id="VCCGQFD"/>
<dbReference type="OrthoDB" id="23627at9989"/>
<dbReference type="PhylomeDB" id="Q64518"/>
<dbReference type="TreeFam" id="TF300651"/>
<dbReference type="Reactome" id="R-MMU-418359">
    <property type="pathway name" value="Reduction of cytosolic Ca++ levels"/>
</dbReference>
<dbReference type="Reactome" id="R-MMU-5578775">
    <property type="pathway name" value="Ion homeostasis"/>
</dbReference>
<dbReference type="Reactome" id="R-MMU-936837">
    <property type="pathway name" value="Ion transport by P-type ATPases"/>
</dbReference>
<dbReference type="BioGRID-ORCS" id="53313">
    <property type="hits" value="6 hits in 78 CRISPR screens"/>
</dbReference>
<dbReference type="ChiTaRS" id="Atp2a3">
    <property type="organism name" value="mouse"/>
</dbReference>
<dbReference type="PRO" id="PR:Q64518"/>
<dbReference type="Proteomes" id="UP000000589">
    <property type="component" value="Chromosome 11"/>
</dbReference>
<dbReference type="RNAct" id="Q64518">
    <property type="molecule type" value="protein"/>
</dbReference>
<dbReference type="Bgee" id="ENSMUSG00000020788">
    <property type="expression patterns" value="Expressed in submandibular gland and 180 other cell types or tissues"/>
</dbReference>
<dbReference type="ExpressionAtlas" id="Q64518">
    <property type="expression patterns" value="baseline and differential"/>
</dbReference>
<dbReference type="GO" id="GO:0005783">
    <property type="term" value="C:endoplasmic reticulum"/>
    <property type="evidence" value="ECO:0000314"/>
    <property type="project" value="MGI"/>
</dbReference>
<dbReference type="GO" id="GO:0033017">
    <property type="term" value="C:sarcoplasmic reticulum membrane"/>
    <property type="evidence" value="ECO:0007669"/>
    <property type="project" value="UniProtKB-SubCell"/>
</dbReference>
<dbReference type="GO" id="GO:0005524">
    <property type="term" value="F:ATP binding"/>
    <property type="evidence" value="ECO:0007669"/>
    <property type="project" value="UniProtKB-KW"/>
</dbReference>
<dbReference type="GO" id="GO:0016887">
    <property type="term" value="F:ATP hydrolysis activity"/>
    <property type="evidence" value="ECO:0007669"/>
    <property type="project" value="InterPro"/>
</dbReference>
<dbReference type="GO" id="GO:0005246">
    <property type="term" value="F:calcium channel regulator activity"/>
    <property type="evidence" value="ECO:0007669"/>
    <property type="project" value="Ensembl"/>
</dbReference>
<dbReference type="GO" id="GO:0005509">
    <property type="term" value="F:calcium ion binding"/>
    <property type="evidence" value="ECO:0000314"/>
    <property type="project" value="MGI"/>
</dbReference>
<dbReference type="GO" id="GO:0030899">
    <property type="term" value="F:calcium-dependent ATPase activity"/>
    <property type="evidence" value="ECO:0007669"/>
    <property type="project" value="Ensembl"/>
</dbReference>
<dbReference type="GO" id="GO:0008656">
    <property type="term" value="F:cysteine-type endopeptidase activator activity involved in apoptotic process"/>
    <property type="evidence" value="ECO:0007669"/>
    <property type="project" value="Ensembl"/>
</dbReference>
<dbReference type="GO" id="GO:0046872">
    <property type="term" value="F:metal ion binding"/>
    <property type="evidence" value="ECO:0007669"/>
    <property type="project" value="UniProtKB-KW"/>
</dbReference>
<dbReference type="GO" id="GO:0005388">
    <property type="term" value="F:P-type calcium transporter activity"/>
    <property type="evidence" value="ECO:0007669"/>
    <property type="project" value="UniProtKB-EC"/>
</dbReference>
<dbReference type="GO" id="GO:0044325">
    <property type="term" value="F:transmembrane transporter binding"/>
    <property type="evidence" value="ECO:0007669"/>
    <property type="project" value="Ensembl"/>
</dbReference>
<dbReference type="GO" id="GO:1903515">
    <property type="term" value="P:calcium ion transport from cytosol to endoplasmic reticulum"/>
    <property type="evidence" value="ECO:0007669"/>
    <property type="project" value="Ensembl"/>
</dbReference>
<dbReference type="GO" id="GO:0006874">
    <property type="term" value="P:intracellular calcium ion homeostasis"/>
    <property type="evidence" value="ECO:0007669"/>
    <property type="project" value="Ensembl"/>
</dbReference>
<dbReference type="GO" id="GO:0070059">
    <property type="term" value="P:intrinsic apoptotic signaling pathway in response to endoplasmic reticulum stress"/>
    <property type="evidence" value="ECO:0007669"/>
    <property type="project" value="Ensembl"/>
</dbReference>
<dbReference type="CDD" id="cd02083">
    <property type="entry name" value="P-type_ATPase_SERCA"/>
    <property type="match status" value="1"/>
</dbReference>
<dbReference type="FunFam" id="3.40.1110.10:FF:000003">
    <property type="entry name" value="Calcium-transporting ATPase"/>
    <property type="match status" value="1"/>
</dbReference>
<dbReference type="FunFam" id="3.40.50.1000:FF:000005">
    <property type="entry name" value="Calcium-transporting ATPase 1"/>
    <property type="match status" value="1"/>
</dbReference>
<dbReference type="FunFam" id="1.20.1110.10:FF:000065">
    <property type="entry name" value="Sarcoplasmic/endoplasmic reticulum calcium ATPase 1"/>
    <property type="match status" value="3"/>
</dbReference>
<dbReference type="FunFam" id="2.70.150.10:FF:000160">
    <property type="entry name" value="Sarcoplasmic/endoplasmic reticulum calcium ATPase 1"/>
    <property type="match status" value="1"/>
</dbReference>
<dbReference type="Gene3D" id="3.40.1110.10">
    <property type="entry name" value="Calcium-transporting ATPase, cytoplasmic domain N"/>
    <property type="match status" value="1"/>
</dbReference>
<dbReference type="Gene3D" id="2.70.150.10">
    <property type="entry name" value="Calcium-transporting ATPase, cytoplasmic transduction domain A"/>
    <property type="match status" value="1"/>
</dbReference>
<dbReference type="Gene3D" id="1.20.1110.10">
    <property type="entry name" value="Calcium-transporting ATPase, transmembrane domain"/>
    <property type="match status" value="1"/>
</dbReference>
<dbReference type="Gene3D" id="3.40.50.1000">
    <property type="entry name" value="HAD superfamily/HAD-like"/>
    <property type="match status" value="1"/>
</dbReference>
<dbReference type="InterPro" id="IPR006068">
    <property type="entry name" value="ATPase_P-typ_cation-transptr_C"/>
</dbReference>
<dbReference type="InterPro" id="IPR004014">
    <property type="entry name" value="ATPase_P-typ_cation-transptr_N"/>
</dbReference>
<dbReference type="InterPro" id="IPR023299">
    <property type="entry name" value="ATPase_P-typ_cyto_dom_N"/>
</dbReference>
<dbReference type="InterPro" id="IPR018303">
    <property type="entry name" value="ATPase_P-typ_P_site"/>
</dbReference>
<dbReference type="InterPro" id="IPR023298">
    <property type="entry name" value="ATPase_P-typ_TM_dom_sf"/>
</dbReference>
<dbReference type="InterPro" id="IPR008250">
    <property type="entry name" value="ATPase_P-typ_transduc_dom_A_sf"/>
</dbReference>
<dbReference type="InterPro" id="IPR036412">
    <property type="entry name" value="HAD-like_sf"/>
</dbReference>
<dbReference type="InterPro" id="IPR023214">
    <property type="entry name" value="HAD_sf"/>
</dbReference>
<dbReference type="InterPro" id="IPR005782">
    <property type="entry name" value="P-type_ATPase_IIA"/>
</dbReference>
<dbReference type="InterPro" id="IPR001757">
    <property type="entry name" value="P_typ_ATPase"/>
</dbReference>
<dbReference type="InterPro" id="IPR044492">
    <property type="entry name" value="P_typ_ATPase_HD_dom"/>
</dbReference>
<dbReference type="NCBIfam" id="TIGR01116">
    <property type="entry name" value="ATPase-IIA1_Ca"/>
    <property type="match status" value="1"/>
</dbReference>
<dbReference type="NCBIfam" id="TIGR01494">
    <property type="entry name" value="ATPase_P-type"/>
    <property type="match status" value="2"/>
</dbReference>
<dbReference type="PANTHER" id="PTHR42861">
    <property type="entry name" value="CALCIUM-TRANSPORTING ATPASE"/>
    <property type="match status" value="1"/>
</dbReference>
<dbReference type="Pfam" id="PF13246">
    <property type="entry name" value="Cation_ATPase"/>
    <property type="match status" value="1"/>
</dbReference>
<dbReference type="Pfam" id="PF00689">
    <property type="entry name" value="Cation_ATPase_C"/>
    <property type="match status" value="1"/>
</dbReference>
<dbReference type="Pfam" id="PF00690">
    <property type="entry name" value="Cation_ATPase_N"/>
    <property type="match status" value="1"/>
</dbReference>
<dbReference type="Pfam" id="PF00122">
    <property type="entry name" value="E1-E2_ATPase"/>
    <property type="match status" value="1"/>
</dbReference>
<dbReference type="Pfam" id="PF00702">
    <property type="entry name" value="Hydrolase"/>
    <property type="match status" value="1"/>
</dbReference>
<dbReference type="PRINTS" id="PR00119">
    <property type="entry name" value="CATATPASE"/>
</dbReference>
<dbReference type="SFLD" id="SFLDG00002">
    <property type="entry name" value="C1.7:_P-type_atpase_like"/>
    <property type="match status" value="1"/>
</dbReference>
<dbReference type="SFLD" id="SFLDF00027">
    <property type="entry name" value="p-type_atpase"/>
    <property type="match status" value="1"/>
</dbReference>
<dbReference type="SMART" id="SM00831">
    <property type="entry name" value="Cation_ATPase_N"/>
    <property type="match status" value="1"/>
</dbReference>
<dbReference type="SUPFAM" id="SSF81653">
    <property type="entry name" value="Calcium ATPase, transduction domain A"/>
    <property type="match status" value="1"/>
</dbReference>
<dbReference type="SUPFAM" id="SSF81665">
    <property type="entry name" value="Calcium ATPase, transmembrane domain M"/>
    <property type="match status" value="1"/>
</dbReference>
<dbReference type="SUPFAM" id="SSF56784">
    <property type="entry name" value="HAD-like"/>
    <property type="match status" value="1"/>
</dbReference>
<dbReference type="SUPFAM" id="SSF81660">
    <property type="entry name" value="Metal cation-transporting ATPase, ATP-binding domain N"/>
    <property type="match status" value="1"/>
</dbReference>
<dbReference type="PROSITE" id="PS00154">
    <property type="entry name" value="ATPASE_E1_E2"/>
    <property type="match status" value="1"/>
</dbReference>
<sequence>MEEAHLLSAADVLRRFSVTAEGGLSLEQVTDARERYGPNELPTEEGKSLWELVVEQFEDLLVRILLLAALVSFVLAWFEEGEETTTAFVEPLVIMLILVANAIVGVWQERNAESAIEALKEYEPEMGKVIRSDRKGVQRIRARDIVPGDIVEVAVGDKVPADLRLIEIKSTTLRVDQSILTGESVSVTKHTDAIPDPRAVNQDKKNMLFSGTNIASGKALGVAVATGLQTELGKIRSQMAAVEPERTPLQRKLDEFGRQLSHAISVICVAVWVINIGHFADPAHGGSWLRGAVYYFKIAVALAVAAIPEGLPAVITTCLALGTRRMARKNAIVRSLPSVETLGCTSVICSDKTGTLTTNQMSVCRMFVVAEAEAGTCRLHEFTISGTTYTPEGEVRQGEQPVRCGQFDGLVELATICALCNDSALDYNEAKGVYEKVGEATETALTCLVEKMNVFDTDLKGLSRVERAGACNSVIKQLMRKEFTLEFSRDRKSMSVYCTPTRADPKVQGSKMFVKGAPESVIERCSSVRVGSRTAPLSTTSREHILAKIRDWGSGSDTLRCLALATRDTPPRKEDMHLDDCSRFVQYETDLTFVGCVGMLDPPRPEVAACITRCSRAGIRVVMITGDNKGTAVAICRRLGIFGDTEDVLGKAYTGREFDDLSPEQQRQACRTARCFARVEPAHKSRIVENLQSFNEITAMTGDGVNDAPALKKAEIGIAMGSGTAVAKSAAEMVLSDDNFASIVAAVEEGRAIYNNMKQFIRYLISSNVGEVVCIFLTAILGLPEALIPVQLLWVNLVTDGLPATALGFNPPDLDIMEKPPRNPREALISGWLFFRYLAIGVYVGLATVAAATWWFLYDTEGPQVTFYQLRNFLKCSEDNPLFAGIDCKVFESRFPTTMALSVLVTIEMCNALNSVSENQSLLRMPPWLNPWLLGAVVMSMALHFLILLVPPLPLIFQVTPLSGRQWGVVLQMSLPVILLDEALKYLSRNHMDEKKDLK</sequence>
<proteinExistence type="evidence at protein level"/>